<keyword id="KW-0028">Amino-acid biosynthesis</keyword>
<keyword id="KW-0963">Cytoplasm</keyword>
<keyword id="KW-0554">One-carbon metabolism</keyword>
<keyword id="KW-0663">Pyridoxal phosphate</keyword>
<keyword id="KW-0808">Transferase</keyword>
<proteinExistence type="inferred from homology"/>
<evidence type="ECO:0000255" key="1">
    <source>
        <dbReference type="HAMAP-Rule" id="MF_00051"/>
    </source>
</evidence>
<accession>Q5LD58</accession>
<reference key="1">
    <citation type="journal article" date="2005" name="Science">
        <title>Extensive DNA inversions in the B. fragilis genome control variable gene expression.</title>
        <authorList>
            <person name="Cerdeno-Tarraga A.-M."/>
            <person name="Patrick S."/>
            <person name="Crossman L.C."/>
            <person name="Blakely G."/>
            <person name="Abratt V."/>
            <person name="Lennard N."/>
            <person name="Poxton I."/>
            <person name="Duerden B."/>
            <person name="Harris B."/>
            <person name="Quail M.A."/>
            <person name="Barron A."/>
            <person name="Clark L."/>
            <person name="Corton C."/>
            <person name="Doggett J."/>
            <person name="Holden M.T.G."/>
            <person name="Larke N."/>
            <person name="Line A."/>
            <person name="Lord A."/>
            <person name="Norbertczak H."/>
            <person name="Ormond D."/>
            <person name="Price C."/>
            <person name="Rabbinowitsch E."/>
            <person name="Woodward J."/>
            <person name="Barrell B.G."/>
            <person name="Parkhill J."/>
        </authorList>
    </citation>
    <scope>NUCLEOTIDE SEQUENCE [LARGE SCALE GENOMIC DNA]</scope>
    <source>
        <strain>ATCC 25285 / DSM 2151 / CCUG 4856 / JCM 11019 / LMG 10263 / NCTC 9343 / Onslow / VPI 2553 / EN-2</strain>
    </source>
</reference>
<organism>
    <name type="scientific">Bacteroides fragilis (strain ATCC 25285 / DSM 2151 / CCUG 4856 / JCM 11019 / LMG 10263 / NCTC 9343 / Onslow / VPI 2553 / EN-2)</name>
    <dbReference type="NCBI Taxonomy" id="272559"/>
    <lineage>
        <taxon>Bacteria</taxon>
        <taxon>Pseudomonadati</taxon>
        <taxon>Bacteroidota</taxon>
        <taxon>Bacteroidia</taxon>
        <taxon>Bacteroidales</taxon>
        <taxon>Bacteroidaceae</taxon>
        <taxon>Bacteroides</taxon>
    </lineage>
</organism>
<protein>
    <recommendedName>
        <fullName evidence="1">Serine hydroxymethyltransferase</fullName>
        <shortName evidence="1">SHMT</shortName>
        <shortName evidence="1">Serine methylase</shortName>
        <ecNumber evidence="1">2.1.2.1</ecNumber>
    </recommendedName>
</protein>
<name>GLYA_BACFN</name>
<sequence>MKRDDLIFDIIEKEHQRQLKGIELIASENFVSDQVMEAMGSCLTNKYAEGYPGKRYYGGCEVVDQSEQIAIDRLKEIFGAEWANVQPHSGAQANAAVFLAVLNPGDKFMGLNLAHGGHLSHGSLVNTSGIIYTPCEYNLKQETGRVDYDQMEEVALREKPKMIIGGGSAYSREWDYKRMREIADKVGAILMIDMAHPAGLIAAGLLDNPVKYAHIVTSTTHKTLRGPRGGVIMMGKDFPNPWGKKTPKGEIKMMSQLLDSAVFPGIQGGPLEHVIAAKAVAFGECLQPEYKEYQKQVQKNAAVLAQALIDRGFTIVSGGTDNHSMLVDLRSKYPTLTGKVAEKALVSADITVNKNMVPFDSRSAFQTSGIRLGTPAITTRGAKEDLMLEIAEMIETVLSNVENEEVIAQVRARVNKTMEKYPIFAY</sequence>
<comment type="function">
    <text evidence="1">Catalyzes the reversible interconversion of serine and glycine with tetrahydrofolate (THF) serving as the one-carbon carrier. This reaction serves as the major source of one-carbon groups required for the biosynthesis of purines, thymidylate, methionine, and other important biomolecules. Also exhibits THF-independent aldolase activity toward beta-hydroxyamino acids, producing glycine and aldehydes, via a retro-aldol mechanism.</text>
</comment>
<comment type="catalytic activity">
    <reaction evidence="1">
        <text>(6R)-5,10-methylene-5,6,7,8-tetrahydrofolate + glycine + H2O = (6S)-5,6,7,8-tetrahydrofolate + L-serine</text>
        <dbReference type="Rhea" id="RHEA:15481"/>
        <dbReference type="ChEBI" id="CHEBI:15377"/>
        <dbReference type="ChEBI" id="CHEBI:15636"/>
        <dbReference type="ChEBI" id="CHEBI:33384"/>
        <dbReference type="ChEBI" id="CHEBI:57305"/>
        <dbReference type="ChEBI" id="CHEBI:57453"/>
        <dbReference type="EC" id="2.1.2.1"/>
    </reaction>
</comment>
<comment type="cofactor">
    <cofactor evidence="1">
        <name>pyridoxal 5'-phosphate</name>
        <dbReference type="ChEBI" id="CHEBI:597326"/>
    </cofactor>
</comment>
<comment type="pathway">
    <text evidence="1">One-carbon metabolism; tetrahydrofolate interconversion.</text>
</comment>
<comment type="pathway">
    <text evidence="1">Amino-acid biosynthesis; glycine biosynthesis; glycine from L-serine: step 1/1.</text>
</comment>
<comment type="subunit">
    <text evidence="1">Homodimer.</text>
</comment>
<comment type="subcellular location">
    <subcellularLocation>
        <location evidence="1">Cytoplasm</location>
    </subcellularLocation>
</comment>
<comment type="similarity">
    <text evidence="1">Belongs to the SHMT family.</text>
</comment>
<feature type="chain" id="PRO_0000234950" description="Serine hydroxymethyltransferase">
    <location>
        <begin position="1"/>
        <end position="426"/>
    </location>
</feature>
<feature type="binding site" evidence="1">
    <location>
        <position position="113"/>
    </location>
    <ligand>
        <name>(6S)-5,6,7,8-tetrahydrofolate</name>
        <dbReference type="ChEBI" id="CHEBI:57453"/>
    </ligand>
</feature>
<feature type="binding site" evidence="1">
    <location>
        <begin position="117"/>
        <end position="119"/>
    </location>
    <ligand>
        <name>(6S)-5,6,7,8-tetrahydrofolate</name>
        <dbReference type="ChEBI" id="CHEBI:57453"/>
    </ligand>
</feature>
<feature type="binding site" evidence="1">
    <location>
        <begin position="363"/>
        <end position="365"/>
    </location>
    <ligand>
        <name>(6S)-5,6,7,8-tetrahydrofolate</name>
        <dbReference type="ChEBI" id="CHEBI:57453"/>
    </ligand>
</feature>
<feature type="site" description="Plays an important role in substrate specificity" evidence="1">
    <location>
        <position position="221"/>
    </location>
</feature>
<feature type="modified residue" description="N6-(pyridoxal phosphate)lysine" evidence="1">
    <location>
        <position position="222"/>
    </location>
</feature>
<gene>
    <name evidence="1" type="primary">glyA</name>
    <name type="ordered locus">BF2258</name>
</gene>
<dbReference type="EC" id="2.1.2.1" evidence="1"/>
<dbReference type="EMBL" id="CR626927">
    <property type="protein sequence ID" value="CAH07952.1"/>
    <property type="molecule type" value="Genomic_DNA"/>
</dbReference>
<dbReference type="RefSeq" id="WP_005787540.1">
    <property type="nucleotide sequence ID" value="NZ_UFTH01000001.1"/>
</dbReference>
<dbReference type="SMR" id="Q5LD58"/>
<dbReference type="PaxDb" id="272559-BF9343_2171"/>
<dbReference type="GeneID" id="60365850"/>
<dbReference type="KEGG" id="bfs:BF9343_2171"/>
<dbReference type="eggNOG" id="COG0112">
    <property type="taxonomic scope" value="Bacteria"/>
</dbReference>
<dbReference type="HOGENOM" id="CLU_022477_2_1_10"/>
<dbReference type="UniPathway" id="UPA00193"/>
<dbReference type="UniPathway" id="UPA00288">
    <property type="reaction ID" value="UER01023"/>
</dbReference>
<dbReference type="Proteomes" id="UP000006731">
    <property type="component" value="Chromosome"/>
</dbReference>
<dbReference type="GO" id="GO:0005829">
    <property type="term" value="C:cytosol"/>
    <property type="evidence" value="ECO:0007669"/>
    <property type="project" value="TreeGrafter"/>
</dbReference>
<dbReference type="GO" id="GO:0004372">
    <property type="term" value="F:glycine hydroxymethyltransferase activity"/>
    <property type="evidence" value="ECO:0007669"/>
    <property type="project" value="UniProtKB-UniRule"/>
</dbReference>
<dbReference type="GO" id="GO:0030170">
    <property type="term" value="F:pyridoxal phosphate binding"/>
    <property type="evidence" value="ECO:0007669"/>
    <property type="project" value="UniProtKB-UniRule"/>
</dbReference>
<dbReference type="GO" id="GO:0019264">
    <property type="term" value="P:glycine biosynthetic process from serine"/>
    <property type="evidence" value="ECO:0007669"/>
    <property type="project" value="UniProtKB-UniRule"/>
</dbReference>
<dbReference type="GO" id="GO:0035999">
    <property type="term" value="P:tetrahydrofolate interconversion"/>
    <property type="evidence" value="ECO:0007669"/>
    <property type="project" value="UniProtKB-UniRule"/>
</dbReference>
<dbReference type="CDD" id="cd00378">
    <property type="entry name" value="SHMT"/>
    <property type="match status" value="1"/>
</dbReference>
<dbReference type="FunFam" id="3.40.640.10:FF:000001">
    <property type="entry name" value="Serine hydroxymethyltransferase"/>
    <property type="match status" value="1"/>
</dbReference>
<dbReference type="Gene3D" id="3.90.1150.10">
    <property type="entry name" value="Aspartate Aminotransferase, domain 1"/>
    <property type="match status" value="1"/>
</dbReference>
<dbReference type="Gene3D" id="3.40.640.10">
    <property type="entry name" value="Type I PLP-dependent aspartate aminotransferase-like (Major domain)"/>
    <property type="match status" value="1"/>
</dbReference>
<dbReference type="HAMAP" id="MF_00051">
    <property type="entry name" value="SHMT"/>
    <property type="match status" value="1"/>
</dbReference>
<dbReference type="InterPro" id="IPR015424">
    <property type="entry name" value="PyrdxlP-dep_Trfase"/>
</dbReference>
<dbReference type="InterPro" id="IPR015421">
    <property type="entry name" value="PyrdxlP-dep_Trfase_major"/>
</dbReference>
<dbReference type="InterPro" id="IPR015422">
    <property type="entry name" value="PyrdxlP-dep_Trfase_small"/>
</dbReference>
<dbReference type="InterPro" id="IPR001085">
    <property type="entry name" value="Ser_HO-MeTrfase"/>
</dbReference>
<dbReference type="InterPro" id="IPR049943">
    <property type="entry name" value="Ser_HO-MeTrfase-like"/>
</dbReference>
<dbReference type="InterPro" id="IPR019798">
    <property type="entry name" value="Ser_HO-MeTrfase_PLP_BS"/>
</dbReference>
<dbReference type="InterPro" id="IPR039429">
    <property type="entry name" value="SHMT-like_dom"/>
</dbReference>
<dbReference type="NCBIfam" id="NF000586">
    <property type="entry name" value="PRK00011.1"/>
    <property type="match status" value="1"/>
</dbReference>
<dbReference type="PANTHER" id="PTHR11680">
    <property type="entry name" value="SERINE HYDROXYMETHYLTRANSFERASE"/>
    <property type="match status" value="1"/>
</dbReference>
<dbReference type="PANTHER" id="PTHR11680:SF35">
    <property type="entry name" value="SERINE HYDROXYMETHYLTRANSFERASE 1"/>
    <property type="match status" value="1"/>
</dbReference>
<dbReference type="Pfam" id="PF00464">
    <property type="entry name" value="SHMT"/>
    <property type="match status" value="1"/>
</dbReference>
<dbReference type="PIRSF" id="PIRSF000412">
    <property type="entry name" value="SHMT"/>
    <property type="match status" value="1"/>
</dbReference>
<dbReference type="SUPFAM" id="SSF53383">
    <property type="entry name" value="PLP-dependent transferases"/>
    <property type="match status" value="1"/>
</dbReference>
<dbReference type="PROSITE" id="PS00096">
    <property type="entry name" value="SHMT"/>
    <property type="match status" value="1"/>
</dbReference>